<feature type="chain" id="PRO_1000164728" description="Dihydroorotate dehydrogenase B (NAD(+)), electron transfer subunit">
    <location>
        <begin position="1"/>
        <end position="254"/>
    </location>
</feature>
<feature type="domain" description="FAD-binding FR-type" evidence="1">
    <location>
        <begin position="1"/>
        <end position="99"/>
    </location>
</feature>
<feature type="binding site" evidence="1">
    <location>
        <begin position="50"/>
        <end position="53"/>
    </location>
    <ligand>
        <name>FAD</name>
        <dbReference type="ChEBI" id="CHEBI:57692"/>
    </ligand>
</feature>
<feature type="binding site" evidence="1">
    <location>
        <begin position="67"/>
        <end position="69"/>
    </location>
    <ligand>
        <name>FAD</name>
        <dbReference type="ChEBI" id="CHEBI:57692"/>
    </ligand>
</feature>
<feature type="binding site" evidence="1">
    <location>
        <begin position="74"/>
        <end position="75"/>
    </location>
    <ligand>
        <name>FAD</name>
        <dbReference type="ChEBI" id="CHEBI:57692"/>
    </ligand>
</feature>
<feature type="binding site" evidence="1">
    <location>
        <position position="218"/>
    </location>
    <ligand>
        <name>[2Fe-2S] cluster</name>
        <dbReference type="ChEBI" id="CHEBI:190135"/>
    </ligand>
</feature>
<feature type="binding site" evidence="1">
    <location>
        <position position="223"/>
    </location>
    <ligand>
        <name>[2Fe-2S] cluster</name>
        <dbReference type="ChEBI" id="CHEBI:190135"/>
    </ligand>
</feature>
<feature type="binding site" evidence="1">
    <location>
        <position position="226"/>
    </location>
    <ligand>
        <name>[2Fe-2S] cluster</name>
        <dbReference type="ChEBI" id="CHEBI:190135"/>
    </ligand>
</feature>
<feature type="binding site" evidence="1">
    <location>
        <position position="241"/>
    </location>
    <ligand>
        <name>[2Fe-2S] cluster</name>
        <dbReference type="ChEBI" id="CHEBI:190135"/>
    </ligand>
</feature>
<evidence type="ECO:0000255" key="1">
    <source>
        <dbReference type="HAMAP-Rule" id="MF_01211"/>
    </source>
</evidence>
<dbReference type="EMBL" id="CP001175">
    <property type="protein sequence ID" value="ACK39077.1"/>
    <property type="molecule type" value="Genomic_DNA"/>
</dbReference>
<dbReference type="SMR" id="B8DDR8"/>
<dbReference type="KEGG" id="lmh:LMHCC_0722"/>
<dbReference type="HOGENOM" id="CLU_003827_1_2_9"/>
<dbReference type="UniPathway" id="UPA00070">
    <property type="reaction ID" value="UER00945"/>
</dbReference>
<dbReference type="GO" id="GO:0051537">
    <property type="term" value="F:2 iron, 2 sulfur cluster binding"/>
    <property type="evidence" value="ECO:0007669"/>
    <property type="project" value="UniProtKB-KW"/>
</dbReference>
<dbReference type="GO" id="GO:0009055">
    <property type="term" value="F:electron transfer activity"/>
    <property type="evidence" value="ECO:0007669"/>
    <property type="project" value="UniProtKB-UniRule"/>
</dbReference>
<dbReference type="GO" id="GO:0050660">
    <property type="term" value="F:flavin adenine dinucleotide binding"/>
    <property type="evidence" value="ECO:0007669"/>
    <property type="project" value="InterPro"/>
</dbReference>
<dbReference type="GO" id="GO:0046872">
    <property type="term" value="F:metal ion binding"/>
    <property type="evidence" value="ECO:0007669"/>
    <property type="project" value="UniProtKB-KW"/>
</dbReference>
<dbReference type="GO" id="GO:0016491">
    <property type="term" value="F:oxidoreductase activity"/>
    <property type="evidence" value="ECO:0007669"/>
    <property type="project" value="InterPro"/>
</dbReference>
<dbReference type="GO" id="GO:0044205">
    <property type="term" value="P:'de novo' UMP biosynthetic process"/>
    <property type="evidence" value="ECO:0007669"/>
    <property type="project" value="UniProtKB-UniRule"/>
</dbReference>
<dbReference type="CDD" id="cd06218">
    <property type="entry name" value="DHOD_e_trans"/>
    <property type="match status" value="1"/>
</dbReference>
<dbReference type="FunFam" id="2.10.240.10:FF:000001">
    <property type="entry name" value="Dihydroorotate dehydrogenase B (NAD(+)), electron transfer subunit"/>
    <property type="match status" value="1"/>
</dbReference>
<dbReference type="FunFam" id="2.40.30.10:FF:000045">
    <property type="entry name" value="Dihydroorotate dehydrogenase B (NAD(+)), electron transfer subunit"/>
    <property type="match status" value="1"/>
</dbReference>
<dbReference type="FunFam" id="3.40.50.80:FF:000017">
    <property type="entry name" value="Dihydroorotate dehydrogenase B (NAD(+)), electron transfer subunit"/>
    <property type="match status" value="1"/>
</dbReference>
<dbReference type="Gene3D" id="2.10.240.10">
    <property type="entry name" value="Dihydroorotate dehydrogenase, electron transfer subunit"/>
    <property type="match status" value="1"/>
</dbReference>
<dbReference type="Gene3D" id="3.40.50.80">
    <property type="entry name" value="Nucleotide-binding domain of ferredoxin-NADP reductase (FNR) module"/>
    <property type="match status" value="1"/>
</dbReference>
<dbReference type="Gene3D" id="2.40.30.10">
    <property type="entry name" value="Translation factors"/>
    <property type="match status" value="1"/>
</dbReference>
<dbReference type="HAMAP" id="MF_01211">
    <property type="entry name" value="DHODB_Fe_S_bind"/>
    <property type="match status" value="1"/>
</dbReference>
<dbReference type="InterPro" id="IPR012165">
    <property type="entry name" value="Cyt_c3_hydrogenase_gsu"/>
</dbReference>
<dbReference type="InterPro" id="IPR037117">
    <property type="entry name" value="Dihydroorotate_DH_ele_sf"/>
</dbReference>
<dbReference type="InterPro" id="IPR019480">
    <property type="entry name" value="Dihydroorotate_DH_Fe-S-bd"/>
</dbReference>
<dbReference type="InterPro" id="IPR023455">
    <property type="entry name" value="Dihydroorotate_DHASE_ETsu"/>
</dbReference>
<dbReference type="InterPro" id="IPR017927">
    <property type="entry name" value="FAD-bd_FR_type"/>
</dbReference>
<dbReference type="InterPro" id="IPR039261">
    <property type="entry name" value="FNR_nucleotide-bd"/>
</dbReference>
<dbReference type="InterPro" id="IPR001433">
    <property type="entry name" value="OxRdtase_FAD/NAD-bd"/>
</dbReference>
<dbReference type="InterPro" id="IPR050353">
    <property type="entry name" value="PyrK_electron_transfer"/>
</dbReference>
<dbReference type="InterPro" id="IPR017938">
    <property type="entry name" value="Riboflavin_synthase-like_b-brl"/>
</dbReference>
<dbReference type="NCBIfam" id="NF000797">
    <property type="entry name" value="PRK00054.1-2"/>
    <property type="match status" value="1"/>
</dbReference>
<dbReference type="NCBIfam" id="NF000799">
    <property type="entry name" value="PRK00054.1-4"/>
    <property type="match status" value="1"/>
</dbReference>
<dbReference type="PANTHER" id="PTHR43513">
    <property type="entry name" value="DIHYDROOROTATE DEHYDROGENASE B (NAD(+)), ELECTRON TRANSFER SUBUNIT"/>
    <property type="match status" value="1"/>
</dbReference>
<dbReference type="PANTHER" id="PTHR43513:SF3">
    <property type="entry name" value="DIHYDROOROTATE DEHYDROGENASE B (NAD(+)), ELECTRON TRANSFER SUBUNIT-RELATED"/>
    <property type="match status" value="1"/>
</dbReference>
<dbReference type="Pfam" id="PF10418">
    <property type="entry name" value="DHODB_Fe-S_bind"/>
    <property type="match status" value="1"/>
</dbReference>
<dbReference type="Pfam" id="PF00175">
    <property type="entry name" value="NAD_binding_1"/>
    <property type="match status" value="1"/>
</dbReference>
<dbReference type="PIRSF" id="PIRSF006816">
    <property type="entry name" value="Cyc3_hyd_g"/>
    <property type="match status" value="1"/>
</dbReference>
<dbReference type="PRINTS" id="PR00409">
    <property type="entry name" value="PHDIOXRDTASE"/>
</dbReference>
<dbReference type="SUPFAM" id="SSF52343">
    <property type="entry name" value="Ferredoxin reductase-like, C-terminal NADP-linked domain"/>
    <property type="match status" value="1"/>
</dbReference>
<dbReference type="SUPFAM" id="SSF63380">
    <property type="entry name" value="Riboflavin synthase domain-like"/>
    <property type="match status" value="1"/>
</dbReference>
<dbReference type="PROSITE" id="PS51384">
    <property type="entry name" value="FAD_FR"/>
    <property type="match status" value="1"/>
</dbReference>
<accession>B8DDR8</accession>
<proteinExistence type="inferred from homology"/>
<name>PYRK_LISMH</name>
<sequence length="254" mass="27592">MLQTEMKVIQQTEIADKVYELILTGECVADMSPGQFLMLKPSRSDLLMRRPISICSYDKTAKTCILLYRVEGDGTRDFSKLSEGDTIDVLGPLGKGFDIDQTPAPKTALLIGGGIGVPPMYQLGKELAGKGVQVTFVNGFQSAKDSFYEKEMTAYGTVHIATVDGSLGTQGFVTDVTKNFPEEPDVIYSCGPKAMLQAVKASFPETKTYLSLEERMACGIGACYACVCPKADDTKKQFKVCEDGPVFRADEVSL</sequence>
<comment type="function">
    <text evidence="1">Responsible for channeling the electrons from the oxidation of dihydroorotate from the FMN redox center in the PyrD type B subunit to the ultimate electron acceptor NAD(+).</text>
</comment>
<comment type="cofactor">
    <cofactor evidence="1">
        <name>[2Fe-2S] cluster</name>
        <dbReference type="ChEBI" id="CHEBI:190135"/>
    </cofactor>
    <text evidence="1">Binds 1 [2Fe-2S] cluster per subunit.</text>
</comment>
<comment type="cofactor">
    <cofactor evidence="1">
        <name>FAD</name>
        <dbReference type="ChEBI" id="CHEBI:57692"/>
    </cofactor>
    <text evidence="1">Binds 1 FAD per subunit.</text>
</comment>
<comment type="pathway">
    <text evidence="1">Pyrimidine metabolism; UMP biosynthesis via de novo pathway; orotate from (S)-dihydroorotate (NAD(+) route): step 1/1.</text>
</comment>
<comment type="subunit">
    <text evidence="1">Heterotetramer of 2 PyrK and 2 PyrD type B subunits.</text>
</comment>
<comment type="similarity">
    <text evidence="1">Belongs to the PyrK family.</text>
</comment>
<organism>
    <name type="scientific">Listeria monocytogenes serotype 4a (strain HCC23)</name>
    <dbReference type="NCBI Taxonomy" id="552536"/>
    <lineage>
        <taxon>Bacteria</taxon>
        <taxon>Bacillati</taxon>
        <taxon>Bacillota</taxon>
        <taxon>Bacilli</taxon>
        <taxon>Bacillales</taxon>
        <taxon>Listeriaceae</taxon>
        <taxon>Listeria</taxon>
    </lineage>
</organism>
<keyword id="KW-0001">2Fe-2S</keyword>
<keyword id="KW-0249">Electron transport</keyword>
<keyword id="KW-0274">FAD</keyword>
<keyword id="KW-0285">Flavoprotein</keyword>
<keyword id="KW-0408">Iron</keyword>
<keyword id="KW-0411">Iron-sulfur</keyword>
<keyword id="KW-0479">Metal-binding</keyword>
<keyword id="KW-0665">Pyrimidine biosynthesis</keyword>
<keyword id="KW-0813">Transport</keyword>
<reference key="1">
    <citation type="journal article" date="2011" name="J. Bacteriol.">
        <title>Genome sequence of lineage III Listeria monocytogenes strain HCC23.</title>
        <authorList>
            <person name="Steele C.L."/>
            <person name="Donaldson J.R."/>
            <person name="Paul D."/>
            <person name="Banes M.M."/>
            <person name="Arick T."/>
            <person name="Bridges S.M."/>
            <person name="Lawrence M.L."/>
        </authorList>
    </citation>
    <scope>NUCLEOTIDE SEQUENCE [LARGE SCALE GENOMIC DNA]</scope>
    <source>
        <strain>HCC23</strain>
    </source>
</reference>
<protein>
    <recommendedName>
        <fullName evidence="1">Dihydroorotate dehydrogenase B (NAD(+)), electron transfer subunit</fullName>
    </recommendedName>
    <alternativeName>
        <fullName evidence="1">Dihydroorotate oxidase B, electron transfer subunit</fullName>
    </alternativeName>
</protein>
<gene>
    <name evidence="1" type="primary">pyrK</name>
    <name type="ordered locus">LMHCC_0722</name>
</gene>